<name>RECX_STRP4</name>
<organism>
    <name type="scientific">Streptococcus pneumoniae serotype 19F (strain G54)</name>
    <dbReference type="NCBI Taxonomy" id="512566"/>
    <lineage>
        <taxon>Bacteria</taxon>
        <taxon>Bacillati</taxon>
        <taxon>Bacillota</taxon>
        <taxon>Bacilli</taxon>
        <taxon>Lactobacillales</taxon>
        <taxon>Streptococcaceae</taxon>
        <taxon>Streptococcus</taxon>
    </lineage>
</organism>
<evidence type="ECO:0000255" key="1">
    <source>
        <dbReference type="HAMAP-Rule" id="MF_01114"/>
    </source>
</evidence>
<dbReference type="EMBL" id="CP001015">
    <property type="protein sequence ID" value="ACF54864.1"/>
    <property type="molecule type" value="Genomic_DNA"/>
</dbReference>
<dbReference type="SMR" id="B5E216"/>
<dbReference type="KEGG" id="spx:SPG_1811"/>
<dbReference type="HOGENOM" id="CLU_066607_4_0_9"/>
<dbReference type="GO" id="GO:0005737">
    <property type="term" value="C:cytoplasm"/>
    <property type="evidence" value="ECO:0007669"/>
    <property type="project" value="UniProtKB-SubCell"/>
</dbReference>
<dbReference type="GO" id="GO:0006282">
    <property type="term" value="P:regulation of DNA repair"/>
    <property type="evidence" value="ECO:0007669"/>
    <property type="project" value="UniProtKB-UniRule"/>
</dbReference>
<dbReference type="Gene3D" id="1.10.10.10">
    <property type="entry name" value="Winged helix-like DNA-binding domain superfamily/Winged helix DNA-binding domain"/>
    <property type="match status" value="4"/>
</dbReference>
<dbReference type="HAMAP" id="MF_01114">
    <property type="entry name" value="RecX"/>
    <property type="match status" value="1"/>
</dbReference>
<dbReference type="InterPro" id="IPR053926">
    <property type="entry name" value="RecX_HTH_1st"/>
</dbReference>
<dbReference type="InterPro" id="IPR053924">
    <property type="entry name" value="RecX_HTH_2nd"/>
</dbReference>
<dbReference type="InterPro" id="IPR053925">
    <property type="entry name" value="RecX_HTH_3rd"/>
</dbReference>
<dbReference type="InterPro" id="IPR003783">
    <property type="entry name" value="Regulatory_RecX"/>
</dbReference>
<dbReference type="InterPro" id="IPR036388">
    <property type="entry name" value="WH-like_DNA-bd_sf"/>
</dbReference>
<dbReference type="NCBIfam" id="NF010733">
    <property type="entry name" value="PRK14135.1"/>
    <property type="match status" value="1"/>
</dbReference>
<dbReference type="PANTHER" id="PTHR33602">
    <property type="entry name" value="REGULATORY PROTEIN RECX FAMILY PROTEIN"/>
    <property type="match status" value="1"/>
</dbReference>
<dbReference type="PANTHER" id="PTHR33602:SF1">
    <property type="entry name" value="REGULATORY PROTEIN RECX FAMILY PROTEIN"/>
    <property type="match status" value="1"/>
</dbReference>
<dbReference type="Pfam" id="PF21982">
    <property type="entry name" value="RecX_HTH1"/>
    <property type="match status" value="1"/>
</dbReference>
<dbReference type="Pfam" id="PF02631">
    <property type="entry name" value="RecX_HTH2"/>
    <property type="match status" value="1"/>
</dbReference>
<dbReference type="Pfam" id="PF21981">
    <property type="entry name" value="RecX_HTH3"/>
    <property type="match status" value="1"/>
</dbReference>
<reference key="1">
    <citation type="journal article" date="2001" name="Microb. Drug Resist.">
        <title>Annotated draft genomic sequence from a Streptococcus pneumoniae type 19F clinical isolate.</title>
        <authorList>
            <person name="Dopazo J."/>
            <person name="Mendoza A."/>
            <person name="Herrero J."/>
            <person name="Caldara F."/>
            <person name="Humbert Y."/>
            <person name="Friedli L."/>
            <person name="Guerrier M."/>
            <person name="Grand-Schenk E."/>
            <person name="Gandin C."/>
            <person name="de Francesco M."/>
            <person name="Polissi A."/>
            <person name="Buell G."/>
            <person name="Feger G."/>
            <person name="Garcia E."/>
            <person name="Peitsch M."/>
            <person name="Garcia-Bustos J.F."/>
        </authorList>
    </citation>
    <scope>NUCLEOTIDE SEQUENCE [LARGE SCALE GENOMIC DNA]</scope>
    <source>
        <strain>G54</strain>
    </source>
</reference>
<reference key="2">
    <citation type="submission" date="2008-03" db="EMBL/GenBank/DDBJ databases">
        <title>Pneumococcal beta glucoside metabolism investigated by whole genome comparison.</title>
        <authorList>
            <person name="Mulas L."/>
            <person name="Trappetti C."/>
            <person name="Hakenbeck R."/>
            <person name="Iannelli F."/>
            <person name="Pozzi G."/>
            <person name="Davidsen T.M."/>
            <person name="Tettelin H."/>
            <person name="Oggioni M."/>
        </authorList>
    </citation>
    <scope>NUCLEOTIDE SEQUENCE [LARGE SCALE GENOMIC DNA]</scope>
    <source>
        <strain>G54</strain>
    </source>
</reference>
<accession>B5E216</accession>
<comment type="function">
    <text evidence="1">Modulates RecA activity.</text>
</comment>
<comment type="subcellular location">
    <subcellularLocation>
        <location evidence="1">Cytoplasm</location>
    </subcellularLocation>
</comment>
<comment type="similarity">
    <text evidence="1">Belongs to the RecX family.</text>
</comment>
<keyword id="KW-0963">Cytoplasm</keyword>
<sequence>MKITKLEKKKRLYLMELDNGDKCYITEDTIVRFMLSRDKVISEEELKEIQDFAQFSYGKNLALYHLSFKARTEKEVREYLKKYDIDKNIVSQVIANLKEDKWINDGQYAYAIINANQLSGDKGPYVLTQKLAQKGISKSTIEEILNDFDFSEVAQRVANKLLKKYEGKLPARALQDKIIQNLTNKGFSYSDAKIAFDDLDSQVDQETTQELIFKELDKQYTKYARKYEGYELKQRLTQVLARKGYDFSDIASALREYL</sequence>
<protein>
    <recommendedName>
        <fullName evidence="1">Regulatory protein RecX</fullName>
    </recommendedName>
</protein>
<gene>
    <name evidence="1" type="primary">recX</name>
    <name type="ordered locus">SPG_1811</name>
</gene>
<feature type="chain" id="PRO_1000137198" description="Regulatory protein RecX">
    <location>
        <begin position="1"/>
        <end position="258"/>
    </location>
</feature>
<proteinExistence type="inferred from homology"/>